<gene>
    <name type="ORF">PHACADRAFT_247750</name>
</gene>
<reference key="1">
    <citation type="journal article" date="2012" name="Plant Biotechnol. J.">
        <title>Constitutive expression of a fungal glucuronoyl esterase in Arabidopsis reveals altered cell wall composition and structure.</title>
        <authorList>
            <person name="Tsai A.Y."/>
            <person name="Canam T."/>
            <person name="Gorzsas A."/>
            <person name="Mellerowicz E.J."/>
            <person name="Campbell M.M."/>
            <person name="Master E.R."/>
        </authorList>
    </citation>
    <scope>NUCLEOTIDE SEQUENCE [MRNA]</scope>
    <scope>FUNCTION</scope>
    <scope>CATALYTIC ACTIVITY</scope>
    <scope>BIOPHYSICOCHEMICAL PROPERTIES</scope>
</reference>
<reference key="2">
    <citation type="journal article" date="2012" name="BMC Genomics">
        <title>Comparative genomics of the white-rot fungi, Phanerochaete carnosa and P. chrysosporium, to elucidate the genetic basis of the distinct wood types they colonize.</title>
        <authorList>
            <person name="Suzuki H."/>
            <person name="MacDonald J."/>
            <person name="Syed K."/>
            <person name="Salamov A."/>
            <person name="Hori C."/>
            <person name="Aerts A."/>
            <person name="Henrissat B."/>
            <person name="Wiebenga A."/>
            <person name="vanKuyk P.A."/>
            <person name="Barry K."/>
            <person name="Lindquist E."/>
            <person name="LaButti K."/>
            <person name="Lapidus A."/>
            <person name="Lucas S."/>
            <person name="Coutinho P."/>
            <person name="Gong Y."/>
            <person name="Samejima M."/>
            <person name="Mahadevan R."/>
            <person name="Abou-Zaid M."/>
            <person name="de Vries R.P."/>
            <person name="Igarashi K."/>
            <person name="Yadav J.S."/>
            <person name="Grigoriev I.V."/>
            <person name="Master E.R."/>
        </authorList>
    </citation>
    <scope>NUCLEOTIDE SEQUENCE [LARGE SCALE GENOMIC DNA]</scope>
    <source>
        <strain>HHB-10118-sp</strain>
    </source>
</reference>
<reference key="3">
    <citation type="journal article" date="2015" name="Phytochemistry">
        <title>Expression of a fungal glucuronoyl esterase in Populus: effects on wood properties and saccharification efficiency.</title>
        <authorList>
            <person name="Latha Gandla M."/>
            <person name="Derba-Maceluch M."/>
            <person name="Liu X."/>
            <person name="Gerber L."/>
            <person name="Master E.R."/>
            <person name="Mellerowicz E.J."/>
            <person name="Joensson L.J."/>
        </authorList>
    </citation>
    <scope>FUNCTION</scope>
    <scope>CATALYTIC ACTIVITY</scope>
</reference>
<sequence length="406" mass="44170">MAFRWLSFLLLALPVLALPQTSSKEAQSFGCSTPANIPFNDDKLPDPFLFNDGTPVRSLTDWSCRRQQLASLIQGYEAGTLPPKPPIVTSTFSQNGLTGNLTVTAGFPGNTTTFSSPVTFPNGTVPTEGWPLLIAYSGLSIPIPDGIAVLTYDNSAIGEQNDQTSRGVGQFFDVYGHNATASAMSAWVWGVSRIIDVLEVTPAAHVNTAKIAVTGCSRDGKGALMAGAFEERIALTIPQESGSGGDTCWRLSKFEQDSGDVVQQATEIVQENVWFSTNFDNFVFNISVLPYDHHSLAGLIAPRPMISYENTDFEWLSPLSGFGCMTAAHPIWEAMGVPDNHGFVQVGNHSHCEFPSDLNPTLFAFFDKFLLGKEANTTIFETNEVFNGTVWNPSQWINWTTPTLSH</sequence>
<evidence type="ECO:0000250" key="1">
    <source>
        <dbReference type="UniProtKB" id="G2QJR6"/>
    </source>
</evidence>
<evidence type="ECO:0000255" key="2"/>
<evidence type="ECO:0000255" key="3">
    <source>
        <dbReference type="PROSITE-ProRule" id="PRU00498"/>
    </source>
</evidence>
<evidence type="ECO:0000269" key="4">
    <source>
    </source>
</evidence>
<evidence type="ECO:0000269" key="5">
    <source>
    </source>
</evidence>
<evidence type="ECO:0000303" key="6">
    <source>
    </source>
</evidence>
<evidence type="ECO:0000305" key="7"/>
<evidence type="ECO:0000305" key="8">
    <source>
    </source>
</evidence>
<evidence type="ECO:0000305" key="9">
    <source>
    </source>
</evidence>
<keyword id="KW-1015">Disulfide bond</keyword>
<keyword id="KW-0325">Glycoprotein</keyword>
<keyword id="KW-0378">Hydrolase</keyword>
<keyword id="KW-0439">Lignin degradation</keyword>
<keyword id="KW-1185">Reference proteome</keyword>
<keyword id="KW-0964">Secreted</keyword>
<keyword id="KW-0719">Serine esterase</keyword>
<keyword id="KW-0732">Signal</keyword>
<organism>
    <name type="scientific">Phanerochaete carnosa (strain HHB-10118-sp)</name>
    <name type="common">White-rot fungus</name>
    <name type="synonym">Peniophora carnosa</name>
    <dbReference type="NCBI Taxonomy" id="650164"/>
    <lineage>
        <taxon>Eukaryota</taxon>
        <taxon>Fungi</taxon>
        <taxon>Dikarya</taxon>
        <taxon>Basidiomycota</taxon>
        <taxon>Agaricomycotina</taxon>
        <taxon>Agaricomycetes</taxon>
        <taxon>Polyporales</taxon>
        <taxon>Phanerochaetaceae</taxon>
        <taxon>Phanerochaete</taxon>
    </lineage>
</organism>
<proteinExistence type="evidence at protein level"/>
<feature type="signal peptide" evidence="2">
    <location>
        <begin position="1"/>
        <end position="17"/>
    </location>
</feature>
<feature type="chain" id="PRO_5003886404" description="4-O-methyl-glucuronoyl methylesterase">
    <location>
        <begin position="18"/>
        <end position="406"/>
    </location>
</feature>
<feature type="short sequence motif" description="GXSYXG catalytic site motif" evidence="1">
    <location>
        <begin position="215"/>
        <end position="220"/>
    </location>
</feature>
<feature type="active site" description="Nucleophile" evidence="1">
    <location>
        <position position="217"/>
    </location>
</feature>
<feature type="active site" description="Proton donor/acceptor" evidence="1">
    <location>
        <position position="351"/>
    </location>
</feature>
<feature type="binding site" evidence="1">
    <location>
        <position position="221"/>
    </location>
    <ligand>
        <name>substrate</name>
    </ligand>
</feature>
<feature type="binding site" evidence="1">
    <location>
        <position position="263"/>
    </location>
    <ligand>
        <name>substrate</name>
    </ligand>
</feature>
<feature type="binding site" evidence="1">
    <location>
        <position position="271"/>
    </location>
    <ligand>
        <name>substrate</name>
    </ligand>
</feature>
<feature type="binding site" evidence="1">
    <location>
        <position position="315"/>
    </location>
    <ligand>
        <name>substrate</name>
    </ligand>
</feature>
<feature type="glycosylation site" description="N-linked (GlcNAc...) asparagine" evidence="3">
    <location>
        <position position="100"/>
    </location>
</feature>
<feature type="glycosylation site" description="N-linked (GlcNAc...) asparagine" evidence="3">
    <location>
        <position position="110"/>
    </location>
</feature>
<feature type="glycosylation site" description="N-linked (GlcNAc...) asparagine" evidence="3">
    <location>
        <position position="122"/>
    </location>
</feature>
<feature type="glycosylation site" description="N-linked (GlcNAc...) asparagine" evidence="3">
    <location>
        <position position="178"/>
    </location>
</feature>
<feature type="glycosylation site" description="N-linked (GlcNAc...) asparagine" evidence="3">
    <location>
        <position position="285"/>
    </location>
</feature>
<feature type="glycosylation site" description="N-linked (GlcNAc...) asparagine" evidence="3">
    <location>
        <position position="348"/>
    </location>
</feature>
<feature type="glycosylation site" description="N-linked (GlcNAc...) asparagine" evidence="3">
    <location>
        <position position="376"/>
    </location>
</feature>
<feature type="glycosylation site" description="N-linked (GlcNAc...) asparagine" evidence="3">
    <location>
        <position position="387"/>
    </location>
</feature>
<feature type="glycosylation site" description="N-linked (GlcNAc...) asparagine" evidence="3">
    <location>
        <position position="398"/>
    </location>
</feature>
<feature type="disulfide bond" evidence="1">
    <location>
        <begin position="31"/>
        <end position="64"/>
    </location>
</feature>
<feature type="disulfide bond" evidence="1">
    <location>
        <begin position="216"/>
        <end position="352"/>
    </location>
</feature>
<feature type="disulfide bond" evidence="1">
    <location>
        <begin position="248"/>
        <end position="324"/>
    </location>
</feature>
<name>GCE_PHACS</name>
<comment type="function">
    <text evidence="4 5">Glucuronoyl esterase which may play a significant role in biomass degradation, as it is considered to disconnect hemicellulose from lignin through the hydrolysis of the ester bond between 4-O-methyl-D-glucuronic acid residues of glucuronoxylans and aromatic alcohols of lignin.</text>
</comment>
<comment type="catalytic activity">
    <reaction evidence="4 5">
        <text>a 4-O-methyl-alpha-D-glucuronosyl ester derivative + H2O = 4-O-methyl-alpha-D-glucuronate derivative + an alcohol + H(+)</text>
        <dbReference type="Rhea" id="RHEA:67452"/>
        <dbReference type="ChEBI" id="CHEBI:15377"/>
        <dbReference type="ChEBI" id="CHEBI:15378"/>
        <dbReference type="ChEBI" id="CHEBI:30879"/>
        <dbReference type="ChEBI" id="CHEBI:171667"/>
        <dbReference type="ChEBI" id="CHEBI:171668"/>
        <dbReference type="EC" id="3.1.1.117"/>
    </reaction>
    <physiologicalReaction direction="left-to-right" evidence="8 9">
        <dbReference type="Rhea" id="RHEA:67453"/>
    </physiologicalReaction>
</comment>
<comment type="biophysicochemical properties">
    <phDependence>
        <text evidence="4">Optimum pH is 6.</text>
    </phDependence>
    <temperatureDependence>
        <text evidence="4">Optimum temperature is 40 degrees Celsius.</text>
    </temperatureDependence>
</comment>
<comment type="subcellular location">
    <subcellularLocation>
        <location evidence="7">Secreted</location>
    </subcellularLocation>
</comment>
<comment type="similarity">
    <text evidence="7">Belongs to the carbohydrate esterase 15 (CE15) family.</text>
</comment>
<protein>
    <recommendedName>
        <fullName evidence="7">4-O-methyl-glucuronoyl methylesterase</fullName>
        <ecNumber evidence="4 5">3.1.1.117</ecNumber>
    </recommendedName>
    <alternativeName>
        <fullName evidence="6">Glucuronoyl esterase</fullName>
        <shortName evidence="6">GCE</shortName>
        <shortName>GE</shortName>
    </alternativeName>
</protein>
<accession>K5XDZ6</accession>
<accession>I6TB92</accession>
<dbReference type="EC" id="3.1.1.117" evidence="4 5"/>
<dbReference type="EMBL" id="JQ972915">
    <property type="protein sequence ID" value="AFM93784.1"/>
    <property type="molecule type" value="mRNA"/>
</dbReference>
<dbReference type="EMBL" id="JH930468">
    <property type="protein sequence ID" value="EKM61262.1"/>
    <property type="molecule type" value="Genomic_DNA"/>
</dbReference>
<dbReference type="RefSeq" id="XP_007390689.1">
    <property type="nucleotide sequence ID" value="XM_007390627.1"/>
</dbReference>
<dbReference type="SMR" id="K5XDZ6"/>
<dbReference type="STRING" id="650164.K5XDZ6"/>
<dbReference type="ESTHER" id="phacs-gce">
    <property type="family name" value="Glucuronoyl_esterase"/>
</dbReference>
<dbReference type="GeneID" id="18914176"/>
<dbReference type="KEGG" id="pco:PHACADRAFT_247750"/>
<dbReference type="HOGENOM" id="CLU_028869_1_1_1"/>
<dbReference type="InParanoid" id="K5XDZ6"/>
<dbReference type="OrthoDB" id="3781271at2759"/>
<dbReference type="BRENDA" id="3.1.1.117">
    <property type="organism ID" value="16451"/>
</dbReference>
<dbReference type="Proteomes" id="UP000008370">
    <property type="component" value="Unassembled WGS sequence"/>
</dbReference>
<dbReference type="GO" id="GO:0005576">
    <property type="term" value="C:extracellular region"/>
    <property type="evidence" value="ECO:0007669"/>
    <property type="project" value="UniProtKB-SubCell"/>
</dbReference>
<dbReference type="GO" id="GO:0052689">
    <property type="term" value="F:carboxylic ester hydrolase activity"/>
    <property type="evidence" value="ECO:0007669"/>
    <property type="project" value="UniProtKB-KW"/>
</dbReference>
<dbReference type="GO" id="GO:0046274">
    <property type="term" value="P:lignin catabolic process"/>
    <property type="evidence" value="ECO:0007669"/>
    <property type="project" value="UniProtKB-KW"/>
</dbReference>
<dbReference type="Gene3D" id="3.40.50.1820">
    <property type="entry name" value="alpha/beta hydrolase"/>
    <property type="match status" value="1"/>
</dbReference>
<dbReference type="InterPro" id="IPR029058">
    <property type="entry name" value="AB_hydrolase_fold"/>
</dbReference>
<dbReference type="InterPro" id="IPR054579">
    <property type="entry name" value="GCE-like_dom"/>
</dbReference>
<dbReference type="Pfam" id="PF22244">
    <property type="entry name" value="GCE_fung"/>
    <property type="match status" value="1"/>
</dbReference>
<dbReference type="SUPFAM" id="SSF53474">
    <property type="entry name" value="alpha/beta-Hydrolases"/>
    <property type="match status" value="1"/>
</dbReference>